<protein>
    <recommendedName>
        <fullName>Phosphate acetyltransferase</fullName>
        <ecNumber>2.3.1.8</ecNumber>
    </recommendedName>
    <alternativeName>
        <fullName>Phosphotransacetylase</fullName>
    </alternativeName>
</protein>
<accession>Q9I5A5</accession>
<proteinExistence type="evidence at protein level"/>
<sequence length="704" mass="75697">MHTFFIAPTGFGVGLTSISLGLLRALERAGLKVGFFKPIAQLHPGDLGPERSSELVARTHGLDTPKPLPLAQVERMLGDGQLDELLEEIISLYQRAAADKDVVIVEGMVPTRHASYAARVNFHLAKSLDAEVILVSAPENETLTELTDRIEIQAQLFGGPRDPKVLGVILNKVRGEADAANAEDGVADFARRLTEHSPLLRDDFRLIGCIPWQDELNAARTRDIADLLSARVINAGDYEQRRVQKIVLCARAVPNTVQLLKPGVLVVTPGDRDDIILAASLAAMNGVPLAGLLLCSDFPPDPRIMELCRGALQGGLPVLSVATGSYDTATNLNRMNKEIPVDDRERAERVTEFVAGHIDFEWLKQRCGTPRELRLSPPAFRYQVVQRAQKAGKRIVLPEGSEPRTVQAAAICQARGIARCVLLAKPEEVQAVAQAQGIVLPEGLEIIDPDLVRQRYVEPMVELRKGKGLNAPMAEQQLEDSVVLATMMLALDEVDGLVSGAIHTTASTIRPALQLIKTAPGYNLVSSVFFMLLPDQVLVYGDCAVNPDPSASDLAEIAVQSAASAQAFGIPARVAMISYSTGDSGSGVDVDKVREATRLAREQRPDLLIDGPLQYDAAAIASVGRQKAPNSPVAGQATVFIFPDLNTGNTTYKAVQRSADCVSVGPMLQGLRKPVNDLSRGALVEDIVYTIALTAIQADAQAPA</sequence>
<keyword id="KW-0012">Acyltransferase</keyword>
<keyword id="KW-0963">Cytoplasm</keyword>
<keyword id="KW-1185">Reference proteome</keyword>
<keyword id="KW-0808">Transferase</keyword>
<name>PTA_PSEAE</name>
<evidence type="ECO:0000250" key="1"/>
<evidence type="ECO:0000269" key="2">
    <source>
    </source>
</evidence>
<evidence type="ECO:0000305" key="3"/>
<dbReference type="EC" id="2.3.1.8"/>
<dbReference type="EMBL" id="AE004091">
    <property type="protein sequence ID" value="AAG04224.1"/>
    <property type="molecule type" value="Genomic_DNA"/>
</dbReference>
<dbReference type="PIR" id="C83541">
    <property type="entry name" value="C83541"/>
</dbReference>
<dbReference type="RefSeq" id="NP_249526.1">
    <property type="nucleotide sequence ID" value="NC_002516.2"/>
</dbReference>
<dbReference type="RefSeq" id="WP_003114221.1">
    <property type="nucleotide sequence ID" value="NZ_QZGE01000007.1"/>
</dbReference>
<dbReference type="SMR" id="Q9I5A5"/>
<dbReference type="FunCoup" id="Q9I5A5">
    <property type="interactions" value="243"/>
</dbReference>
<dbReference type="STRING" id="208964.PA0835"/>
<dbReference type="PaxDb" id="208964-PA0835"/>
<dbReference type="GeneID" id="882123"/>
<dbReference type="KEGG" id="pae:PA0835"/>
<dbReference type="PATRIC" id="fig|208964.12.peg.866"/>
<dbReference type="PseudoCAP" id="PA0835"/>
<dbReference type="HOGENOM" id="CLU_019723_2_1_6"/>
<dbReference type="InParanoid" id="Q9I5A5"/>
<dbReference type="OrthoDB" id="9808984at2"/>
<dbReference type="PhylomeDB" id="Q9I5A5"/>
<dbReference type="BioCyc" id="PAER208964:G1FZ6-849-MONOMER"/>
<dbReference type="UniPathway" id="UPA00340">
    <property type="reaction ID" value="UER00459"/>
</dbReference>
<dbReference type="Proteomes" id="UP000002438">
    <property type="component" value="Chromosome"/>
</dbReference>
<dbReference type="GO" id="GO:0005737">
    <property type="term" value="C:cytoplasm"/>
    <property type="evidence" value="ECO:0007669"/>
    <property type="project" value="UniProtKB-SubCell"/>
</dbReference>
<dbReference type="GO" id="GO:0008959">
    <property type="term" value="F:phosphate acetyltransferase activity"/>
    <property type="evidence" value="ECO:0007669"/>
    <property type="project" value="UniProtKB-EC"/>
</dbReference>
<dbReference type="GO" id="GO:0006085">
    <property type="term" value="P:acetyl-CoA biosynthetic process"/>
    <property type="evidence" value="ECO:0007669"/>
    <property type="project" value="UniProtKB-UniPathway"/>
</dbReference>
<dbReference type="CDD" id="cd03109">
    <property type="entry name" value="DTBS"/>
    <property type="match status" value="1"/>
</dbReference>
<dbReference type="FunFam" id="3.40.50.10750:FF:000001">
    <property type="entry name" value="Phosphate acetyltransferase"/>
    <property type="match status" value="1"/>
</dbReference>
<dbReference type="Gene3D" id="3.40.50.10950">
    <property type="match status" value="1"/>
</dbReference>
<dbReference type="Gene3D" id="3.40.1390.20">
    <property type="entry name" value="HprK N-terminal domain-like"/>
    <property type="match status" value="1"/>
</dbReference>
<dbReference type="Gene3D" id="3.40.50.10750">
    <property type="entry name" value="Isocitrate/Isopropylmalate dehydrogenase-like"/>
    <property type="match status" value="1"/>
</dbReference>
<dbReference type="Gene3D" id="3.40.50.300">
    <property type="entry name" value="P-loop containing nucleotide triphosphate hydrolases"/>
    <property type="match status" value="1"/>
</dbReference>
<dbReference type="InterPro" id="IPR010766">
    <property type="entry name" value="DRTGG"/>
</dbReference>
<dbReference type="InterPro" id="IPR016475">
    <property type="entry name" value="P-Actrans_bac"/>
</dbReference>
<dbReference type="InterPro" id="IPR027417">
    <property type="entry name" value="P-loop_NTPase"/>
</dbReference>
<dbReference type="InterPro" id="IPR004614">
    <property type="entry name" value="P_AcTrfase"/>
</dbReference>
<dbReference type="InterPro" id="IPR042113">
    <property type="entry name" value="P_AcTrfase_dom1"/>
</dbReference>
<dbReference type="InterPro" id="IPR042112">
    <property type="entry name" value="P_AcTrfase_dom2"/>
</dbReference>
<dbReference type="InterPro" id="IPR050500">
    <property type="entry name" value="Phos_Acetyltrans/Butyryltrans"/>
</dbReference>
<dbReference type="InterPro" id="IPR002505">
    <property type="entry name" value="PTA_PTB"/>
</dbReference>
<dbReference type="InterPro" id="IPR028979">
    <property type="entry name" value="Ser_kin/Pase_Hpr-like_N_sf"/>
</dbReference>
<dbReference type="NCBIfam" id="NF004167">
    <property type="entry name" value="PRK05632.1"/>
    <property type="match status" value="1"/>
</dbReference>
<dbReference type="NCBIfam" id="NF007233">
    <property type="entry name" value="PRK09653.1"/>
    <property type="match status" value="1"/>
</dbReference>
<dbReference type="NCBIfam" id="TIGR00651">
    <property type="entry name" value="pta"/>
    <property type="match status" value="1"/>
</dbReference>
<dbReference type="PANTHER" id="PTHR43356">
    <property type="entry name" value="PHOSPHATE ACETYLTRANSFERASE"/>
    <property type="match status" value="1"/>
</dbReference>
<dbReference type="PANTHER" id="PTHR43356:SF3">
    <property type="entry name" value="PHOSPHATE ACETYLTRANSFERASE"/>
    <property type="match status" value="1"/>
</dbReference>
<dbReference type="Pfam" id="PF13500">
    <property type="entry name" value="AAA_26"/>
    <property type="match status" value="1"/>
</dbReference>
<dbReference type="Pfam" id="PF07085">
    <property type="entry name" value="DRTGG"/>
    <property type="match status" value="1"/>
</dbReference>
<dbReference type="Pfam" id="PF01515">
    <property type="entry name" value="PTA_PTB"/>
    <property type="match status" value="1"/>
</dbReference>
<dbReference type="PIRSF" id="PIRSF006107">
    <property type="entry name" value="PhpActrans_proteobac"/>
    <property type="match status" value="1"/>
</dbReference>
<dbReference type="SUPFAM" id="SSF75138">
    <property type="entry name" value="HprK N-terminal domain-like"/>
    <property type="match status" value="1"/>
</dbReference>
<dbReference type="SUPFAM" id="SSF53659">
    <property type="entry name" value="Isocitrate/Isopropylmalate dehydrogenase-like"/>
    <property type="match status" value="1"/>
</dbReference>
<dbReference type="SUPFAM" id="SSF52540">
    <property type="entry name" value="P-loop containing nucleoside triphosphate hydrolases"/>
    <property type="match status" value="1"/>
</dbReference>
<gene>
    <name type="primary">pta</name>
    <name type="ordered locus">PA0835</name>
</gene>
<reference key="1">
    <citation type="journal article" date="2000" name="Nature">
        <title>Complete genome sequence of Pseudomonas aeruginosa PAO1, an opportunistic pathogen.</title>
        <authorList>
            <person name="Stover C.K."/>
            <person name="Pham X.-Q.T."/>
            <person name="Erwin A.L."/>
            <person name="Mizoguchi S.D."/>
            <person name="Warrener P."/>
            <person name="Hickey M.J."/>
            <person name="Brinkman F.S.L."/>
            <person name="Hufnagle W.O."/>
            <person name="Kowalik D.J."/>
            <person name="Lagrou M."/>
            <person name="Garber R.L."/>
            <person name="Goltry L."/>
            <person name="Tolentino E."/>
            <person name="Westbrock-Wadman S."/>
            <person name="Yuan Y."/>
            <person name="Brody L.L."/>
            <person name="Coulter S.N."/>
            <person name="Folger K.R."/>
            <person name="Kas A."/>
            <person name="Larbig K."/>
            <person name="Lim R.M."/>
            <person name="Smith K.A."/>
            <person name="Spencer D.H."/>
            <person name="Wong G.K.-S."/>
            <person name="Wu Z."/>
            <person name="Paulsen I.T."/>
            <person name="Reizer J."/>
            <person name="Saier M.H. Jr."/>
            <person name="Hancock R.E.W."/>
            <person name="Lory S."/>
            <person name="Olson M.V."/>
        </authorList>
    </citation>
    <scope>NUCLEOTIDE SEQUENCE [LARGE SCALE GENOMIC DNA]</scope>
    <source>
        <strain>ATCC 15692 / DSM 22644 / CIP 104116 / JCM 14847 / LMG 12228 / 1C / PRS 101 / PAO1</strain>
    </source>
</reference>
<reference key="2">
    <citation type="journal article" date="2004" name="J. Bacteriol.">
        <title>Long-term anaerobic survival of the opportunistic pathogen Pseudomonas aeruginosa via pyruvate fermentation.</title>
        <authorList>
            <person name="Eschbach M."/>
            <person name="Schreiber K."/>
            <person name="Trunk K."/>
            <person name="Buer J."/>
            <person name="Jahn D."/>
            <person name="Schobert M."/>
        </authorList>
    </citation>
    <scope>FUNCTION</scope>
    <scope>CATALYTIC ACTIVITY</scope>
    <scope>ACTIVITY REGULATION</scope>
    <scope>INDUCTION</scope>
    <scope>DISRUPTION PHENOTYPE</scope>
</reference>
<organism>
    <name type="scientific">Pseudomonas aeruginosa (strain ATCC 15692 / DSM 22644 / CIP 104116 / JCM 14847 / LMG 12228 / 1C / PRS 101 / PAO1)</name>
    <dbReference type="NCBI Taxonomy" id="208964"/>
    <lineage>
        <taxon>Bacteria</taxon>
        <taxon>Pseudomonadati</taxon>
        <taxon>Pseudomonadota</taxon>
        <taxon>Gammaproteobacteria</taxon>
        <taxon>Pseudomonadales</taxon>
        <taxon>Pseudomonadaceae</taxon>
        <taxon>Pseudomonas</taxon>
    </lineage>
</organism>
<comment type="function">
    <text evidence="2">Involved in acetate metabolism. In combination with LdhA and AckA, allows fermentation of pyruvate, enhancing long-term survival under anaerobic conditions.</text>
</comment>
<comment type="catalytic activity">
    <reaction evidence="2">
        <text>acetyl-CoA + phosphate = acetyl phosphate + CoA</text>
        <dbReference type="Rhea" id="RHEA:19521"/>
        <dbReference type="ChEBI" id="CHEBI:22191"/>
        <dbReference type="ChEBI" id="CHEBI:43474"/>
        <dbReference type="ChEBI" id="CHEBI:57287"/>
        <dbReference type="ChEBI" id="CHEBI:57288"/>
        <dbReference type="EC" id="2.3.1.8"/>
    </reaction>
</comment>
<comment type="activity regulation">
    <text evidence="2">Activity is increased under anaerobic growth conditions.</text>
</comment>
<comment type="pathway">
    <text>Metabolic intermediate biosynthesis; acetyl-CoA biosynthesis; acetyl-CoA from acetate: step 2/2.</text>
</comment>
<comment type="subunit">
    <text evidence="1">Homohexamer.</text>
</comment>
<comment type="subcellular location">
    <subcellularLocation>
        <location evidence="3">Cytoplasm</location>
    </subcellularLocation>
</comment>
<comment type="induction">
    <text evidence="2">The ackA-pta operon is induced under oxygen-limiting conditions by the oxygen regulator Anr and DNA-binding integration host factor.</text>
</comment>
<comment type="domain">
    <text evidence="1">The N-terminal region seems to be important for proper quaternary structure. The C-terminal region contains the substrate-binding site (By similarity).</text>
</comment>
<comment type="disruption phenotype">
    <text evidence="2">Decreased survival under anaerobic conditions.</text>
</comment>
<comment type="similarity">
    <text evidence="3">In the N-terminal section; belongs to the CobB/CobQ family.</text>
</comment>
<comment type="similarity">
    <text evidence="3">In the C-terminal section; belongs to the phosphate acetyltransferase and butyryltransferase family.</text>
</comment>
<feature type="chain" id="PRO_0000405549" description="Phosphate acetyltransferase">
    <location>
        <begin position="1"/>
        <end position="704"/>
    </location>
</feature>
<feature type="region of interest" description="Phosphate acetyltransferase">
    <location>
        <begin position="379"/>
        <end position="704"/>
    </location>
</feature>